<comment type="function">
    <text evidence="1">Transports viral genome to neighboring plant cells directly through plasmosdesmata, without any budding. The movement protein allows efficient cell to cell propagation, by bypassing the host cell wall barrier (By similarity). Increases virus accumulation and symptom severity.</text>
</comment>
<comment type="subcellular location">
    <subcellularLocation>
        <location evidence="1">Host cell junction</location>
        <location evidence="1">Host plasmodesma</location>
    </subcellularLocation>
    <subcellularLocation>
        <location evidence="1">Host cytoplasm</location>
    </subcellularLocation>
    <text evidence="1">Constituent of spherical cytoplasmic structures, called virus factories, that appear early after infection and are the site of viral replication and packaging.</text>
</comment>
<reference key="1">
    <citation type="journal article" date="1990" name="Virology">
        <title>Sequence analysis of rice dwarf phytoreovirus genome segments S4, S5, and S6: comparison with the equivalent wound tumor virus segments.</title>
        <authorList>
            <person name="Suzuki N."/>
            <person name="Watanabe Y."/>
            <person name="Kusano T."/>
            <person name="Kitagawa Y."/>
        </authorList>
    </citation>
    <scope>NUCLEOTIDE SEQUENCE [GENOMIC RNA]</scope>
</reference>
<name>MVP_RDVA</name>
<protein>
    <recommendedName>
        <fullName>Movement protein</fullName>
    </recommendedName>
    <alternativeName>
        <fullName>Non-structural protein 6</fullName>
        <shortName>Pns6</shortName>
    </alternativeName>
</protein>
<accession>P29249</accession>
<proteinExistence type="inferred from homology"/>
<sequence>MDTETLCLITADSGKVYGILKAIFGDESEIVKKLIDFDVSIRVVPLNLGLLNIFRDNAADLDNADLMKRRFGNTMGSRIVEAYRRSQDSKYKRNVCKTTGLLVCLFGGGLGLSREADKHKKFVEGKSHNILSVEMLKRALSIGGQNVDANKISSFWFATYTIFTTVYSPRLRYQAGSSKRIIALSESRNQYRSNLFWDLRDDSSHEVMSMVHVLSALFASALTAYISTRVAHELTQGNDERESLNNVLVWLKTLTFEPSTIALIAYIWLVSPTDAQATITIGSVMESESSDDFPDIVKILSYTSNTMLPVQLLEDGRTAYCSVADGYTTHTTALTLITDYNSSHMSDKFGVLINIVKFEHAYALHYVHHKPRDGKEMTITSPSSEMMFTSVVVTPLSSYPLIHARNAVIDWLRTFVHMFPDSGSLVIPADSYTWIHNLAQDMFPWVRLSTTLDIRDDHYFQVLCDCLSLEHDSRNHTKVEKLIKYMKASVYNFTSEARGNMLLAITVYK</sequence>
<organism>
    <name type="scientific">Rice dwarf virus (isolate Akita)</name>
    <name type="common">RDV</name>
    <dbReference type="NCBI Taxonomy" id="142803"/>
    <lineage>
        <taxon>Viruses</taxon>
        <taxon>Riboviria</taxon>
        <taxon>Orthornavirae</taxon>
        <taxon>Duplornaviricota</taxon>
        <taxon>Resentoviricetes</taxon>
        <taxon>Reovirales</taxon>
        <taxon>Sedoreoviridae</taxon>
        <taxon>Phytoreovirus</taxon>
        <taxon>Rice dwarf virus</taxon>
    </lineage>
</organism>
<keyword id="KW-1031">Host cell junction</keyword>
<keyword id="KW-1035">Host cytoplasm</keyword>
<keyword id="KW-0813">Transport</keyword>
<keyword id="KW-0916">Viral movement protein</keyword>
<feature type="chain" id="PRO_0000222788" description="Movement protein">
    <location>
        <begin position="1"/>
        <end position="509"/>
    </location>
</feature>
<dbReference type="EMBL" id="M91653">
    <property type="protein sequence ID" value="AAA73236.1"/>
    <property type="molecule type" value="Genomic_RNA"/>
</dbReference>
<dbReference type="PIR" id="C45342">
    <property type="entry name" value="C45342"/>
</dbReference>
<dbReference type="GO" id="GO:0030430">
    <property type="term" value="C:host cell cytoplasm"/>
    <property type="evidence" value="ECO:0007669"/>
    <property type="project" value="UniProtKB-SubCell"/>
</dbReference>
<dbReference type="GO" id="GO:0044219">
    <property type="term" value="C:host cell plasmodesma"/>
    <property type="evidence" value="ECO:0007669"/>
    <property type="project" value="UniProtKB-SubCell"/>
</dbReference>
<dbReference type="GO" id="GO:0046740">
    <property type="term" value="P:transport of virus in host, cell to cell"/>
    <property type="evidence" value="ECO:0007669"/>
    <property type="project" value="UniProtKB-KW"/>
</dbReference>
<evidence type="ECO:0000250" key="1"/>
<organismHost>
    <name type="scientific">Alopecurus aequalis</name>
    <dbReference type="NCBI Taxonomy" id="114194"/>
</organismHost>
<organismHost>
    <name type="scientific">Echinochloa crus-galli</name>
    <name type="common">Barnyard grass</name>
    <name type="synonym">Panicum crus-galli</name>
    <dbReference type="NCBI Taxonomy" id="90397"/>
</organismHost>
<organismHost>
    <name type="scientific">Nephotettix cincticeps</name>
    <name type="common">Green rice leafhopper</name>
    <name type="synonym">Selenocephalus cincticeps</name>
    <dbReference type="NCBI Taxonomy" id="94400"/>
</organismHost>
<organismHost>
    <name type="scientific">Oryza sativa</name>
    <name type="common">Rice</name>
    <dbReference type="NCBI Taxonomy" id="4530"/>
</organismHost>
<organismHost>
    <name type="scientific">Paspalum</name>
    <dbReference type="NCBI Taxonomy" id="147271"/>
</organismHost>